<keyword id="KW-0687">Ribonucleoprotein</keyword>
<keyword id="KW-0689">Ribosomal protein</keyword>
<keyword id="KW-0694">RNA-binding</keyword>
<keyword id="KW-0699">rRNA-binding</keyword>
<sequence>MRSAKLKFEKRRSRIRHKISKTSNRVRLSIFKSGRHIYAQIIDDSKSITIAAASTLDEKIKKLKKSHCNIENAIKVGEEIAKKADSAGIKDVVFDRGGYKYHGVVKALADAAREKIKF</sequence>
<comment type="function">
    <text evidence="1">This is one of the proteins that bind and probably mediate the attachment of the 5S RNA into the large ribosomal subunit, where it forms part of the central protuberance.</text>
</comment>
<comment type="subunit">
    <text evidence="1">Part of the 50S ribosomal subunit; part of the 5S rRNA/L5/L18/L25 subcomplex. Contacts the 5S and 23S rRNAs.</text>
</comment>
<comment type="similarity">
    <text evidence="1">Belongs to the universal ribosomal protein uL18 family.</text>
</comment>
<protein>
    <recommendedName>
        <fullName evidence="1">Large ribosomal subunit protein uL18</fullName>
    </recommendedName>
    <alternativeName>
        <fullName evidence="2">50S ribosomal protein L18</fullName>
    </alternativeName>
</protein>
<name>RL18_RICAE</name>
<accession>C3PP91</accession>
<reference key="1">
    <citation type="journal article" date="2009" name="BMC Genomics">
        <title>Analysis of the Rickettsia africae genome reveals that virulence acquisition in Rickettsia species may be explained by genome reduction.</title>
        <authorList>
            <person name="Fournier P.-E."/>
            <person name="El Karkouri K."/>
            <person name="Leroy Q."/>
            <person name="Robert C."/>
            <person name="Giumelli B."/>
            <person name="Renesto P."/>
            <person name="Socolovschi C."/>
            <person name="Parola P."/>
            <person name="Audic S."/>
            <person name="Raoult D."/>
        </authorList>
    </citation>
    <scope>NUCLEOTIDE SEQUENCE [LARGE SCALE GENOMIC DNA]</scope>
    <source>
        <strain>ESF-5</strain>
    </source>
</reference>
<gene>
    <name evidence="1" type="primary">rplR</name>
    <name type="ordered locus">RAF_ORF0896</name>
</gene>
<evidence type="ECO:0000255" key="1">
    <source>
        <dbReference type="HAMAP-Rule" id="MF_01337"/>
    </source>
</evidence>
<evidence type="ECO:0000305" key="2"/>
<organism>
    <name type="scientific">Rickettsia africae (strain ESF-5)</name>
    <dbReference type="NCBI Taxonomy" id="347255"/>
    <lineage>
        <taxon>Bacteria</taxon>
        <taxon>Pseudomonadati</taxon>
        <taxon>Pseudomonadota</taxon>
        <taxon>Alphaproteobacteria</taxon>
        <taxon>Rickettsiales</taxon>
        <taxon>Rickettsiaceae</taxon>
        <taxon>Rickettsieae</taxon>
        <taxon>Rickettsia</taxon>
        <taxon>spotted fever group</taxon>
    </lineage>
</organism>
<dbReference type="EMBL" id="CP001612">
    <property type="protein sequence ID" value="ACP53751.1"/>
    <property type="molecule type" value="Genomic_DNA"/>
</dbReference>
<dbReference type="RefSeq" id="WP_004997824.1">
    <property type="nucleotide sequence ID" value="NC_012633.1"/>
</dbReference>
<dbReference type="SMR" id="C3PP91"/>
<dbReference type="GeneID" id="95361470"/>
<dbReference type="KEGG" id="raf:RAF_ORF0896"/>
<dbReference type="HOGENOM" id="CLU_098841_0_1_5"/>
<dbReference type="Proteomes" id="UP000002305">
    <property type="component" value="Chromosome"/>
</dbReference>
<dbReference type="GO" id="GO:0022625">
    <property type="term" value="C:cytosolic large ribosomal subunit"/>
    <property type="evidence" value="ECO:0007669"/>
    <property type="project" value="TreeGrafter"/>
</dbReference>
<dbReference type="GO" id="GO:0008097">
    <property type="term" value="F:5S rRNA binding"/>
    <property type="evidence" value="ECO:0007669"/>
    <property type="project" value="TreeGrafter"/>
</dbReference>
<dbReference type="GO" id="GO:0003735">
    <property type="term" value="F:structural constituent of ribosome"/>
    <property type="evidence" value="ECO:0007669"/>
    <property type="project" value="InterPro"/>
</dbReference>
<dbReference type="GO" id="GO:0006412">
    <property type="term" value="P:translation"/>
    <property type="evidence" value="ECO:0007669"/>
    <property type="project" value="UniProtKB-UniRule"/>
</dbReference>
<dbReference type="CDD" id="cd00432">
    <property type="entry name" value="Ribosomal_L18_L5e"/>
    <property type="match status" value="1"/>
</dbReference>
<dbReference type="FunFam" id="3.30.420.100:FF:000001">
    <property type="entry name" value="50S ribosomal protein L18"/>
    <property type="match status" value="1"/>
</dbReference>
<dbReference type="Gene3D" id="3.30.420.100">
    <property type="match status" value="1"/>
</dbReference>
<dbReference type="HAMAP" id="MF_01337_B">
    <property type="entry name" value="Ribosomal_uL18_B"/>
    <property type="match status" value="1"/>
</dbReference>
<dbReference type="InterPro" id="IPR004389">
    <property type="entry name" value="Ribosomal_uL18_bac-type"/>
</dbReference>
<dbReference type="InterPro" id="IPR005484">
    <property type="entry name" value="Ribosomal_uL18_bac/euk"/>
</dbReference>
<dbReference type="NCBIfam" id="TIGR00060">
    <property type="entry name" value="L18_bact"/>
    <property type="match status" value="1"/>
</dbReference>
<dbReference type="PANTHER" id="PTHR12899">
    <property type="entry name" value="39S RIBOSOMAL PROTEIN L18, MITOCHONDRIAL"/>
    <property type="match status" value="1"/>
</dbReference>
<dbReference type="PANTHER" id="PTHR12899:SF3">
    <property type="entry name" value="LARGE RIBOSOMAL SUBUNIT PROTEIN UL18M"/>
    <property type="match status" value="1"/>
</dbReference>
<dbReference type="Pfam" id="PF00861">
    <property type="entry name" value="Ribosomal_L18p"/>
    <property type="match status" value="1"/>
</dbReference>
<dbReference type="SUPFAM" id="SSF53137">
    <property type="entry name" value="Translational machinery components"/>
    <property type="match status" value="1"/>
</dbReference>
<feature type="chain" id="PRO_1000214681" description="Large ribosomal subunit protein uL18">
    <location>
        <begin position="1"/>
        <end position="118"/>
    </location>
</feature>
<proteinExistence type="inferred from homology"/>